<name>HIS6_SHEFN</name>
<proteinExistence type="inferred from homology"/>
<dbReference type="EC" id="4.3.2.10" evidence="1"/>
<dbReference type="EMBL" id="CP000447">
    <property type="protein sequence ID" value="ABI71564.1"/>
    <property type="molecule type" value="Genomic_DNA"/>
</dbReference>
<dbReference type="RefSeq" id="WP_011637180.1">
    <property type="nucleotide sequence ID" value="NC_008345.1"/>
</dbReference>
<dbReference type="SMR" id="Q083K1"/>
<dbReference type="STRING" id="318167.Sfri_1714"/>
<dbReference type="KEGG" id="sfr:Sfri_1714"/>
<dbReference type="eggNOG" id="COG0107">
    <property type="taxonomic scope" value="Bacteria"/>
</dbReference>
<dbReference type="HOGENOM" id="CLU_048577_4_0_6"/>
<dbReference type="OrthoDB" id="9781903at2"/>
<dbReference type="UniPathway" id="UPA00031">
    <property type="reaction ID" value="UER00010"/>
</dbReference>
<dbReference type="Proteomes" id="UP000000684">
    <property type="component" value="Chromosome"/>
</dbReference>
<dbReference type="GO" id="GO:0005737">
    <property type="term" value="C:cytoplasm"/>
    <property type="evidence" value="ECO:0007669"/>
    <property type="project" value="UniProtKB-SubCell"/>
</dbReference>
<dbReference type="GO" id="GO:0000107">
    <property type="term" value="F:imidazoleglycerol-phosphate synthase activity"/>
    <property type="evidence" value="ECO:0007669"/>
    <property type="project" value="UniProtKB-UniRule"/>
</dbReference>
<dbReference type="GO" id="GO:0016829">
    <property type="term" value="F:lyase activity"/>
    <property type="evidence" value="ECO:0007669"/>
    <property type="project" value="UniProtKB-KW"/>
</dbReference>
<dbReference type="GO" id="GO:0000105">
    <property type="term" value="P:L-histidine biosynthetic process"/>
    <property type="evidence" value="ECO:0007669"/>
    <property type="project" value="UniProtKB-UniRule"/>
</dbReference>
<dbReference type="CDD" id="cd04731">
    <property type="entry name" value="HisF"/>
    <property type="match status" value="1"/>
</dbReference>
<dbReference type="FunFam" id="3.20.20.70:FF:000006">
    <property type="entry name" value="Imidazole glycerol phosphate synthase subunit HisF"/>
    <property type="match status" value="1"/>
</dbReference>
<dbReference type="Gene3D" id="3.20.20.70">
    <property type="entry name" value="Aldolase class I"/>
    <property type="match status" value="1"/>
</dbReference>
<dbReference type="HAMAP" id="MF_01013">
    <property type="entry name" value="HisF"/>
    <property type="match status" value="1"/>
</dbReference>
<dbReference type="InterPro" id="IPR013785">
    <property type="entry name" value="Aldolase_TIM"/>
</dbReference>
<dbReference type="InterPro" id="IPR006062">
    <property type="entry name" value="His_biosynth"/>
</dbReference>
<dbReference type="InterPro" id="IPR004651">
    <property type="entry name" value="HisF"/>
</dbReference>
<dbReference type="InterPro" id="IPR050064">
    <property type="entry name" value="IGPS_HisA/HisF"/>
</dbReference>
<dbReference type="InterPro" id="IPR011060">
    <property type="entry name" value="RibuloseP-bd_barrel"/>
</dbReference>
<dbReference type="NCBIfam" id="TIGR00735">
    <property type="entry name" value="hisF"/>
    <property type="match status" value="1"/>
</dbReference>
<dbReference type="PANTHER" id="PTHR21235:SF2">
    <property type="entry name" value="IMIDAZOLE GLYCEROL PHOSPHATE SYNTHASE HISHF"/>
    <property type="match status" value="1"/>
</dbReference>
<dbReference type="PANTHER" id="PTHR21235">
    <property type="entry name" value="IMIDAZOLE GLYCEROL PHOSPHATE SYNTHASE SUBUNIT HISF/H IGP SYNTHASE SUBUNIT HISF/H"/>
    <property type="match status" value="1"/>
</dbReference>
<dbReference type="Pfam" id="PF00977">
    <property type="entry name" value="His_biosynth"/>
    <property type="match status" value="1"/>
</dbReference>
<dbReference type="SUPFAM" id="SSF51366">
    <property type="entry name" value="Ribulose-phoshate binding barrel"/>
    <property type="match status" value="1"/>
</dbReference>
<gene>
    <name evidence="1" type="primary">hisF</name>
    <name type="ordered locus">Sfri_1714</name>
</gene>
<comment type="function">
    <text evidence="1">IGPS catalyzes the conversion of PRFAR and glutamine to IGP, AICAR and glutamate. The HisF subunit catalyzes the cyclization activity that produces IGP and AICAR from PRFAR using the ammonia provided by the HisH subunit.</text>
</comment>
<comment type="catalytic activity">
    <reaction evidence="1">
        <text>5-[(5-phospho-1-deoxy-D-ribulos-1-ylimino)methylamino]-1-(5-phospho-beta-D-ribosyl)imidazole-4-carboxamide + L-glutamine = D-erythro-1-(imidazol-4-yl)glycerol 3-phosphate + 5-amino-1-(5-phospho-beta-D-ribosyl)imidazole-4-carboxamide + L-glutamate + H(+)</text>
        <dbReference type="Rhea" id="RHEA:24793"/>
        <dbReference type="ChEBI" id="CHEBI:15378"/>
        <dbReference type="ChEBI" id="CHEBI:29985"/>
        <dbReference type="ChEBI" id="CHEBI:58278"/>
        <dbReference type="ChEBI" id="CHEBI:58359"/>
        <dbReference type="ChEBI" id="CHEBI:58475"/>
        <dbReference type="ChEBI" id="CHEBI:58525"/>
        <dbReference type="EC" id="4.3.2.10"/>
    </reaction>
</comment>
<comment type="pathway">
    <text evidence="1">Amino-acid biosynthesis; L-histidine biosynthesis; L-histidine from 5-phospho-alpha-D-ribose 1-diphosphate: step 5/9.</text>
</comment>
<comment type="subunit">
    <text evidence="1">Heterodimer of HisH and HisF.</text>
</comment>
<comment type="subcellular location">
    <subcellularLocation>
        <location evidence="1">Cytoplasm</location>
    </subcellularLocation>
</comment>
<comment type="similarity">
    <text evidence="1">Belongs to the HisA/HisF family.</text>
</comment>
<feature type="chain" id="PRO_1000063145" description="Imidazole glycerol phosphate synthase subunit HisF">
    <location>
        <begin position="1"/>
        <end position="257"/>
    </location>
</feature>
<feature type="active site" evidence="1">
    <location>
        <position position="11"/>
    </location>
</feature>
<feature type="active site" evidence="1">
    <location>
        <position position="130"/>
    </location>
</feature>
<sequence length="257" mass="28259">MLAKRIVPCLDVREGKVVKGVQFRNHEIVGDIVPLAARYAEEGADELVFYDITASAHDRVIDKSWVSRVAEQIDIPFCVAGGIKTIEQAREKLAFGADKISINSPALSDPSLISRLQDEFGRQCIVIGIDSFYDAVSDSYKVKQFTGDEAATKDTQWYTQDWVEEVQKRGCGEIVLNVMNQDGVRGGYDIKQLSIVRAICDVPLIASGGAGTMEHFKAVFELAKVDAALAASVFHKGIIDIGELKQYLHANNIAIRL</sequence>
<organism>
    <name type="scientific">Shewanella frigidimarina (strain NCIMB 400)</name>
    <dbReference type="NCBI Taxonomy" id="318167"/>
    <lineage>
        <taxon>Bacteria</taxon>
        <taxon>Pseudomonadati</taxon>
        <taxon>Pseudomonadota</taxon>
        <taxon>Gammaproteobacteria</taxon>
        <taxon>Alteromonadales</taxon>
        <taxon>Shewanellaceae</taxon>
        <taxon>Shewanella</taxon>
    </lineage>
</organism>
<evidence type="ECO:0000255" key="1">
    <source>
        <dbReference type="HAMAP-Rule" id="MF_01013"/>
    </source>
</evidence>
<accession>Q083K1</accession>
<reference key="1">
    <citation type="submission" date="2006-08" db="EMBL/GenBank/DDBJ databases">
        <title>Complete sequence of Shewanella frigidimarina NCIMB 400.</title>
        <authorList>
            <consortium name="US DOE Joint Genome Institute"/>
            <person name="Copeland A."/>
            <person name="Lucas S."/>
            <person name="Lapidus A."/>
            <person name="Barry K."/>
            <person name="Detter J.C."/>
            <person name="Glavina del Rio T."/>
            <person name="Hammon N."/>
            <person name="Israni S."/>
            <person name="Dalin E."/>
            <person name="Tice H."/>
            <person name="Pitluck S."/>
            <person name="Fredrickson J.K."/>
            <person name="Kolker E."/>
            <person name="McCuel L.A."/>
            <person name="DiChristina T."/>
            <person name="Nealson K.H."/>
            <person name="Newman D."/>
            <person name="Tiedje J.M."/>
            <person name="Zhou J."/>
            <person name="Romine M.F."/>
            <person name="Culley D.E."/>
            <person name="Serres M."/>
            <person name="Chertkov O."/>
            <person name="Brettin T."/>
            <person name="Bruce D."/>
            <person name="Han C."/>
            <person name="Tapia R."/>
            <person name="Gilna P."/>
            <person name="Schmutz J."/>
            <person name="Larimer F."/>
            <person name="Land M."/>
            <person name="Hauser L."/>
            <person name="Kyrpides N."/>
            <person name="Mikhailova N."/>
            <person name="Richardson P."/>
        </authorList>
    </citation>
    <scope>NUCLEOTIDE SEQUENCE [LARGE SCALE GENOMIC DNA]</scope>
    <source>
        <strain>NCIMB 400</strain>
    </source>
</reference>
<keyword id="KW-0028">Amino-acid biosynthesis</keyword>
<keyword id="KW-0963">Cytoplasm</keyword>
<keyword id="KW-0368">Histidine biosynthesis</keyword>
<keyword id="KW-0456">Lyase</keyword>
<keyword id="KW-1185">Reference proteome</keyword>
<protein>
    <recommendedName>
        <fullName evidence="1">Imidazole glycerol phosphate synthase subunit HisF</fullName>
        <ecNumber evidence="1">4.3.2.10</ecNumber>
    </recommendedName>
    <alternativeName>
        <fullName evidence="1">IGP synthase cyclase subunit</fullName>
    </alternativeName>
    <alternativeName>
        <fullName evidence="1">IGP synthase subunit HisF</fullName>
    </alternativeName>
    <alternativeName>
        <fullName evidence="1">ImGP synthase subunit HisF</fullName>
        <shortName evidence="1">IGPS subunit HisF</shortName>
    </alternativeName>
</protein>